<accession>A0A084B9Z8</accession>
<protein>
    <recommendedName>
        <fullName evidence="3">Ankyrin repeat domain-containing protein SAT10</fullName>
    </recommendedName>
    <alternativeName>
        <fullName evidence="3">Satratoxin biosynthesis SC1 cluster protein 10</fullName>
    </alternativeName>
</protein>
<reference key="1">
    <citation type="journal article" date="2014" name="BMC Genomics">
        <title>Comparative genome sequencing reveals chemotype-specific gene clusters in the toxigenic black mold Stachybotrys.</title>
        <authorList>
            <person name="Semeiks J."/>
            <person name="Borek D."/>
            <person name="Otwinowski Z."/>
            <person name="Grishin N.V."/>
        </authorList>
    </citation>
    <scope>NUCLEOTIDE SEQUENCE [LARGE SCALE GENOMIC DNA]</scope>
    <scope>IDENTIFICATION</scope>
    <scope>FUNCTION</scope>
    <source>
        <strain>CBS 109288 / IBT 7711</strain>
    </source>
</reference>
<dbReference type="EMBL" id="KL647604">
    <property type="protein sequence ID" value="KEY74377.1"/>
    <property type="molecule type" value="Genomic_DNA"/>
</dbReference>
<dbReference type="SMR" id="A0A084B9Z8"/>
<dbReference type="HOGENOM" id="CLU_002405_1_0_1"/>
<dbReference type="Proteomes" id="UP000028045">
    <property type="component" value="Unassembled WGS sequence"/>
</dbReference>
<dbReference type="Gene3D" id="1.25.40.20">
    <property type="entry name" value="Ankyrin repeat-containing domain"/>
    <property type="match status" value="4"/>
</dbReference>
<dbReference type="InterPro" id="IPR002110">
    <property type="entry name" value="Ankyrin_rpt"/>
</dbReference>
<dbReference type="InterPro" id="IPR036770">
    <property type="entry name" value="Ankyrin_rpt-contain_sf"/>
</dbReference>
<dbReference type="InterPro" id="IPR051165">
    <property type="entry name" value="Multifunctional_ANK_Repeat"/>
</dbReference>
<dbReference type="InterPro" id="IPR056884">
    <property type="entry name" value="NPHP3-like_N"/>
</dbReference>
<dbReference type="PANTHER" id="PTHR24123">
    <property type="entry name" value="ANKYRIN REPEAT-CONTAINING"/>
    <property type="match status" value="1"/>
</dbReference>
<dbReference type="PANTHER" id="PTHR24123:SF33">
    <property type="entry name" value="PROTEIN HOS4"/>
    <property type="match status" value="1"/>
</dbReference>
<dbReference type="Pfam" id="PF12796">
    <property type="entry name" value="Ank_2"/>
    <property type="match status" value="5"/>
</dbReference>
<dbReference type="Pfam" id="PF24883">
    <property type="entry name" value="NPHP3_N"/>
    <property type="match status" value="1"/>
</dbReference>
<dbReference type="SMART" id="SM00248">
    <property type="entry name" value="ANK"/>
    <property type="match status" value="18"/>
</dbReference>
<dbReference type="SUPFAM" id="SSF48403">
    <property type="entry name" value="Ankyrin repeat"/>
    <property type="match status" value="3"/>
</dbReference>
<dbReference type="PROSITE" id="PS50297">
    <property type="entry name" value="ANK_REP_REGION"/>
    <property type="match status" value="1"/>
</dbReference>
<dbReference type="PROSITE" id="PS50088">
    <property type="entry name" value="ANK_REPEAT"/>
    <property type="match status" value="3"/>
</dbReference>
<organism>
    <name type="scientific">Stachybotrys chartarum (strain CBS 109288 / IBT 7711)</name>
    <name type="common">Toxic black mold</name>
    <name type="synonym">Stilbospora chartarum</name>
    <dbReference type="NCBI Taxonomy" id="1280523"/>
    <lineage>
        <taxon>Eukaryota</taxon>
        <taxon>Fungi</taxon>
        <taxon>Dikarya</taxon>
        <taxon>Ascomycota</taxon>
        <taxon>Pezizomycotina</taxon>
        <taxon>Sordariomycetes</taxon>
        <taxon>Hypocreomycetidae</taxon>
        <taxon>Hypocreales</taxon>
        <taxon>Stachybotryaceae</taxon>
        <taxon>Stachybotrys</taxon>
    </lineage>
</organism>
<name>SAT10_STACB</name>
<gene>
    <name evidence="3" type="primary">SAT10</name>
    <name type="ORF">S7711_07284</name>
</gene>
<keyword id="KW-0040">ANK repeat</keyword>
<keyword id="KW-0677">Repeat</keyword>
<sequence length="1930" mass="213700">MSIQFFSYDVGGLIVKEVRLLILWRRSALPNGRTLFARMTQALRIASSDKKYRSIFDRTSLLAFFATPHRSTQHQSPESVALALLNQCYCGLISPWISIFPPNFSKVVARSEVEFRPPTRAHILNVFQDPGPASPIKDSVVVHKSCAVLGVDGEVLIGLDCSHYTLARLLKARDKRYLLRQASHAALRHGKAFQQVVGLFFLDSIRTFDAEGPKFECRKVVSQLASLPQLQSWRQGSVDSRVLWFGTPAMLDPTSLFRTLRSQIQEENQLGDPIFIRVDSTLHRHNELSEPQILASMCQQILRQQPQLTSALQDLLLNVEDAAVGSRDCWKQRTLWNCLLVLLYHPKDAETFCFIDATSSLQTKNLAGQLESVMKESEMPLRLIVSCRSTAKQTPEASTQVDVDLSDAGFDEPLRQDLEEWIRESLECGLTDSTLREALLTQILSSGDFHLARHALEFFASTGSWLTKWSVPSVWAMLSKQSAAELFIEDNIRRHGQWLLIPMLWALEAFEPMQVDEIDVALMLEDNGVAGQVEDFINLLPGISTIRRGVFVIADHVRPAFDYLWGKYFATYQHHVYLAKSCVAALRHHLRVTPAIPQLREDKSSDAAARLCTYAAMNWVRHFSLQRNSETTKYVPHPTIITANETDPGSPNEHAGVSEAFLEDPELSRLWITHLRRALDLDGLDEELGHLILPETLGSRLGICTGWAIRISRQLASMRLSSERDVTNSLLVIGSETDDLAMVQSCLSADPSPTEHTLGYALAAASDPIKEKLLQQVGEPSDEFLYRALLSSICFGNVSVTEDLLVRITDKVRVAQVTPLEGSKLQWPQANESSESAETFRHTPLGVATAYGDADVIDLLINHDISWWDLEERSPPPGTWNALHHAALGGQRNIMCKLLLQQRKGVLNSSARIPNTVTESGNTPLILAASRGFHKIVALLLEDGSMRGYGVDVNIQNEQRSSALLAAARYGFSQTLEMLLTYEGIDYSKTDSNGASILHLALVNDREAAALQILAHKDIFSNEMEYQEANMEANSVNNFEDDDSFSESSVDTTDVVYTVPARPRISLHQKDGSGLTSLTIAIWRNLKSIVEILIAMDADANGPEGEFEAPLVAAAEVGSFELFTMFTKIGATKTEAALNTISTGRTRPLHAACAMGHLEVVRELLKDSVTQLSHTDSNQRTPLCAAISRDQNHVISVLLDRETETGLQEGLWEAARSGKAHILDQLLRRGAEINAQDEYGNTALQWASYYNKPRCVERLLLGGARLDLLDCDNVNALGDAARSGSAEPLKLLVDVGVDVNAEAGGDTALCRAIWAEEVECVSVLLQGGAKFILSSAQSRFENLLTFAVQVSSPEILRLLLKAPEERDLAPTLRSACAMQSTSQLEVLLEFYDPAKVDLGSGWTILHLAAVHGTLAGLTKVLDHATGRAALNYGPKKVGTPFEMAAFSSKESLSKVEHLYSNAALPGLVQPSSRFGTALNAASYRLNDPVVVYLLQKMQLEDINASGARYGNAIQNMLASAWMDTERSLKLLGILLEAGVSLTPTSADRHGTALHTAALFSPKPLVEKVIETSRMLADERDGEGRLPIHLSALQEEWASMMLLSTTTSTIRSVDKMGRNAVHLAAAAGARSVLEKIFEVEENEDLLLEADFDGWTPFHWACRGEDDDCARFLIEKARKIFDSKWDSMKHELVTTDEKTWTPLDVARFHQRREVELLLSLGMTTSDAENWMPDQSQNLGSYCDSCACQIWHEEHHSSALHCKKLYLRFNGWSRMCQLAPTAKRKYTPTLLGYKTCFKVADNLVKARLAKVLVPHSQGPLQRKGRGKGEGEEDEEGIATVENYPVSQSCGVEMIRAFVIDDRRIQPDATRNLNHEVSVGSEDQTQMSLGTGRLFVQSVDSPLEMVMDVAAIFLSSPKSAHKQDETTRAFATAK</sequence>
<evidence type="ECO:0000255" key="1"/>
<evidence type="ECO:0000269" key="2">
    <source>
    </source>
</evidence>
<evidence type="ECO:0000303" key="3">
    <source>
    </source>
</evidence>
<evidence type="ECO:0000305" key="4"/>
<evidence type="ECO:0000305" key="5">
    <source>
    </source>
</evidence>
<comment type="function">
    <text evidence="5">Ankyrin repeat domain-containing protein; part of the satratoxin SC1 cluster involved in the biosynthesis of satratoxins, trichothecene mycotoxins that are associated with human food poisonings (PubMed:25015739). Satratoxins are suggested to be made by products of multiple gene clusters (SC1, SC2 and SC3) that encode 21 proteins in all, including polyketide synthases, acetyltransferases, and other enzymes expected to modify the trichothecene skeleton (PubMed:25015739). SC1 encodes 10 proteins, SAT1 to SAT10 (PubMed:25015739). The largest are SAT8, which encodes a putative polyketide synthase (PKS) with a conventional non-reducing architecture, and SAT10, a putative protein containing four ankyrin repeats and thus may be involved in protein scaffolding (PubMed:25015739). The putative short-chain reductase SAT3 may assist the PKS in some capacity (PubMed:25015739). SAT6 contains a secretory lipase domain and acts probably as a trichothecene esterase (PubMed:25015739). SAT5 encodes a putative acetyltransferase, and so, with SAT6, may affect endogenous protection from toxicity (PubMed:25015739). The probable transcription factor SAT9 may regulate the expression of the SC1 cluster (PubMed:25015739). SC2 encodes proteins SAT11 to SAT16, the largest of which encodes the putative reducing PKS SAT13 (PubMed:25015739). SAT11 is a cytochrome P450 monooxygenase, while SAT14 and SAT16 are probable acetyltransferases (PubMed:25015739). The SC2 cluster may be regulated by the transcription factor SAT15 (PubMed:25015739). SC3 is a small cluster that encodes 5 proteins, SAT17 to SAT21 (PubMed:25015739). SAT21 is a putative MFS-type transporter which may have a role in exporting secondary metabolites (PubMed:25015739). The four other proteins putatively encoded in SC3 include the taurine hydroxylase-like protein SAT17, the O-methyltransferase SAT18, the acetyltransferase SAT19, and the Cys6-type zinc finger SAT20, the latter being probably involved in regulation of SC3 expression (PubMed:25015739).</text>
</comment>
<comment type="pathway">
    <text evidence="2">Mycotoxin biosynthesis.</text>
</comment>
<comment type="miscellaneous">
    <text evidence="4">Trichothecenes are sesquiterpenoid toxins that act by inhibiting protein biosynthesis.</text>
</comment>
<proteinExistence type="predicted"/>
<feature type="chain" id="PRO_0000442416" description="Ankyrin repeat domain-containing protein SAT10">
    <location>
        <begin position="1"/>
        <end position="1930"/>
    </location>
</feature>
<feature type="repeat" description="ANK 1" evidence="1">
    <location>
        <begin position="840"/>
        <end position="872"/>
    </location>
</feature>
<feature type="repeat" description="ANK 2" evidence="1">
    <location>
        <begin position="878"/>
        <end position="908"/>
    </location>
</feature>
<feature type="repeat" description="ANK 3" evidence="1">
    <location>
        <begin position="920"/>
        <end position="949"/>
    </location>
</feature>
<feature type="repeat" description="ANK 4" evidence="1">
    <location>
        <begin position="959"/>
        <end position="989"/>
    </location>
</feature>
<feature type="repeat" description="ANK 5" evidence="1">
    <location>
        <begin position="993"/>
        <end position="1023"/>
    </location>
</feature>
<feature type="repeat" description="ANK 6" evidence="1">
    <location>
        <begin position="1073"/>
        <end position="1102"/>
    </location>
</feature>
<feature type="repeat" description="ANK 7" evidence="1">
    <location>
        <begin position="1106"/>
        <end position="1135"/>
    </location>
</feature>
<feature type="repeat" description="ANK 8" evidence="1">
    <location>
        <begin position="1144"/>
        <end position="1174"/>
    </location>
</feature>
<feature type="repeat" description="ANK 9" evidence="1">
    <location>
        <begin position="1178"/>
        <end position="1205"/>
    </location>
</feature>
<feature type="repeat" description="ANK 10" evidence="1">
    <location>
        <begin position="1206"/>
        <end position="1235"/>
    </location>
</feature>
<feature type="repeat" description="ANK 11" evidence="1">
    <location>
        <begin position="1239"/>
        <end position="1268"/>
    </location>
</feature>
<feature type="repeat" description="ANK 12" evidence="1">
    <location>
        <begin position="1272"/>
        <end position="1301"/>
    </location>
</feature>
<feature type="repeat" description="ANK 13" evidence="1">
    <location>
        <begin position="1304"/>
        <end position="1333"/>
    </location>
</feature>
<feature type="repeat" description="ANK 14" evidence="1">
    <location>
        <begin position="1339"/>
        <end position="1368"/>
    </location>
</feature>
<feature type="repeat" description="ANK 15" evidence="1">
    <location>
        <begin position="1400"/>
        <end position="1429"/>
    </location>
</feature>
<feature type="repeat" description="ANK 16" evidence="1">
    <location>
        <begin position="1514"/>
        <end position="1543"/>
    </location>
</feature>
<feature type="repeat" description="ANK 17" evidence="1">
    <location>
        <begin position="1548"/>
        <end position="1577"/>
    </location>
</feature>
<feature type="repeat" description="ANK 18" evidence="1">
    <location>
        <begin position="1615"/>
        <end position="1644"/>
    </location>
</feature>
<feature type="repeat" description="ANK 19" evidence="1">
    <location>
        <begin position="1651"/>
        <end position="1680"/>
    </location>
</feature>
<feature type="repeat" description="ANK 20" evidence="1">
    <location>
        <begin position="1696"/>
        <end position="1724"/>
    </location>
</feature>